<proteinExistence type="inferred from homology"/>
<keyword id="KW-0378">Hydrolase</keyword>
<organism>
    <name type="scientific">Pseudomonas syringae pv. syringae (strain B728a)</name>
    <dbReference type="NCBI Taxonomy" id="205918"/>
    <lineage>
        <taxon>Bacteria</taxon>
        <taxon>Pseudomonadati</taxon>
        <taxon>Pseudomonadota</taxon>
        <taxon>Gammaproteobacteria</taxon>
        <taxon>Pseudomonadales</taxon>
        <taxon>Pseudomonadaceae</taxon>
        <taxon>Pseudomonas</taxon>
        <taxon>Pseudomonas syringae</taxon>
    </lineage>
</organism>
<accession>Q4ZXA2</accession>
<evidence type="ECO:0000255" key="1">
    <source>
        <dbReference type="HAMAP-Rule" id="MF_01243"/>
    </source>
</evidence>
<evidence type="ECO:0000255" key="2">
    <source>
        <dbReference type="PROSITE-ProRule" id="PRU00054"/>
    </source>
</evidence>
<reference key="1">
    <citation type="journal article" date="2005" name="Proc. Natl. Acad. Sci. U.S.A.">
        <title>Comparison of the complete genome sequences of Pseudomonas syringae pv. syringae B728a and pv. tomato DC3000.</title>
        <authorList>
            <person name="Feil H."/>
            <person name="Feil W.S."/>
            <person name="Chain P."/>
            <person name="Larimer F."/>
            <person name="Dibartolo G."/>
            <person name="Copeland A."/>
            <person name="Lykidis A."/>
            <person name="Trong S."/>
            <person name="Nolan M."/>
            <person name="Goltsman E."/>
            <person name="Thiel J."/>
            <person name="Malfatti S."/>
            <person name="Loper J.E."/>
            <person name="Lapidus A."/>
            <person name="Detter J.C."/>
            <person name="Land M."/>
            <person name="Richardson P.M."/>
            <person name="Kyrpides N.C."/>
            <person name="Ivanova N."/>
            <person name="Lindow S.E."/>
        </authorList>
    </citation>
    <scope>NUCLEOTIDE SEQUENCE [LARGE SCALE GENOMIC DNA]</scope>
    <source>
        <strain>B728a</strain>
    </source>
</reference>
<name>AMIF_PSEU2</name>
<protein>
    <recommendedName>
        <fullName evidence="1">Formamidase</fullName>
        <ecNumber evidence="1">3.5.1.49</ecNumber>
    </recommendedName>
    <alternativeName>
        <fullName evidence="1">Formamide amidohydrolase</fullName>
    </alternativeName>
</protein>
<feature type="chain" id="PRO_1000067062" description="Formamidase">
    <location>
        <begin position="1"/>
        <end position="338"/>
    </location>
</feature>
<feature type="domain" description="CN hydrolase" evidence="2">
    <location>
        <begin position="15"/>
        <end position="257"/>
    </location>
</feature>
<feature type="active site" description="Proton acceptor" evidence="1">
    <location>
        <position position="61"/>
    </location>
</feature>
<feature type="active site" description="Proton donor" evidence="1">
    <location>
        <position position="130"/>
    </location>
</feature>
<feature type="active site" description="Nucleophile" evidence="1">
    <location>
        <position position="163"/>
    </location>
</feature>
<gene>
    <name evidence="1" type="primary">amiF</name>
    <name type="ordered locus">Psyr_1166</name>
</gene>
<dbReference type="EC" id="3.5.1.49" evidence="1"/>
<dbReference type="EMBL" id="CP000075">
    <property type="protein sequence ID" value="AAY36220.1"/>
    <property type="molecule type" value="Genomic_DNA"/>
</dbReference>
<dbReference type="RefSeq" id="WP_004406592.1">
    <property type="nucleotide sequence ID" value="NC_007005.1"/>
</dbReference>
<dbReference type="RefSeq" id="YP_234258.1">
    <property type="nucleotide sequence ID" value="NC_007005.1"/>
</dbReference>
<dbReference type="SMR" id="Q4ZXA2"/>
<dbReference type="STRING" id="205918.Psyr_1166"/>
<dbReference type="KEGG" id="psb:Psyr_1166"/>
<dbReference type="PATRIC" id="fig|205918.7.peg.1200"/>
<dbReference type="eggNOG" id="COG0388">
    <property type="taxonomic scope" value="Bacteria"/>
</dbReference>
<dbReference type="HOGENOM" id="CLU_071797_0_0_6"/>
<dbReference type="OrthoDB" id="9803803at2"/>
<dbReference type="Proteomes" id="UP000000426">
    <property type="component" value="Chromosome"/>
</dbReference>
<dbReference type="GO" id="GO:0004328">
    <property type="term" value="F:formamidase activity"/>
    <property type="evidence" value="ECO:0007669"/>
    <property type="project" value="UniProtKB-UniRule"/>
</dbReference>
<dbReference type="GO" id="GO:0050126">
    <property type="term" value="F:N-carbamoylputrescine amidase activity"/>
    <property type="evidence" value="ECO:0007669"/>
    <property type="project" value="TreeGrafter"/>
</dbReference>
<dbReference type="GO" id="GO:0033388">
    <property type="term" value="P:putrescine biosynthetic process from arginine"/>
    <property type="evidence" value="ECO:0007669"/>
    <property type="project" value="TreeGrafter"/>
</dbReference>
<dbReference type="CDD" id="cd07565">
    <property type="entry name" value="aliphatic_amidase"/>
    <property type="match status" value="1"/>
</dbReference>
<dbReference type="FunFam" id="3.60.110.10:FF:000022">
    <property type="entry name" value="Formamidase"/>
    <property type="match status" value="1"/>
</dbReference>
<dbReference type="Gene3D" id="3.60.110.10">
    <property type="entry name" value="Carbon-nitrogen hydrolase"/>
    <property type="match status" value="1"/>
</dbReference>
<dbReference type="HAMAP" id="MF_01243">
    <property type="entry name" value="Formamidase"/>
    <property type="match status" value="1"/>
</dbReference>
<dbReference type="InterPro" id="IPR050345">
    <property type="entry name" value="Aliph_Amidase/BUP"/>
</dbReference>
<dbReference type="InterPro" id="IPR003010">
    <property type="entry name" value="C-N_Hydrolase"/>
</dbReference>
<dbReference type="InterPro" id="IPR036526">
    <property type="entry name" value="C-N_Hydrolase_sf"/>
</dbReference>
<dbReference type="InterPro" id="IPR022843">
    <property type="entry name" value="Formamidase"/>
</dbReference>
<dbReference type="NCBIfam" id="NF009803">
    <property type="entry name" value="PRK13287.1"/>
    <property type="match status" value="1"/>
</dbReference>
<dbReference type="PANTHER" id="PTHR43674:SF15">
    <property type="entry name" value="FORMAMIDASE"/>
    <property type="match status" value="1"/>
</dbReference>
<dbReference type="PANTHER" id="PTHR43674">
    <property type="entry name" value="NITRILASE C965.09-RELATED"/>
    <property type="match status" value="1"/>
</dbReference>
<dbReference type="Pfam" id="PF00795">
    <property type="entry name" value="CN_hydrolase"/>
    <property type="match status" value="1"/>
</dbReference>
<dbReference type="SUPFAM" id="SSF56317">
    <property type="entry name" value="Carbon-nitrogen hydrolase"/>
    <property type="match status" value="1"/>
</dbReference>
<dbReference type="PROSITE" id="PS50263">
    <property type="entry name" value="CN_HYDROLASE"/>
    <property type="match status" value="1"/>
</dbReference>
<sequence length="338" mass="37176">MASGLGGLNKSPNGVVIGLAQLALPDPHTREALWMQTQKVVGMVAKARRSNPGMDLIVFPEYSLHGLSMSTAPEIMCSLDGPEVMALREACKTHRIWGCFSIMEANPHGNPFNSGLIVDDLGEIRLYYRKLHPWVPVEPWEPGDLGIPVCDGPRGSKLALIICHDGMFPEMARECAYKGADIMLRTAGYTAPIRHSWKITNQSNAFTNLMQTASVCMCGSDGTFDSMGEAMFVDFDGTIMAEGGGRADEIVCCELRPDLVREARVHWGVENNIYQFGHRGYVAVKGGARDCPYTYMHDLSAGRYRLPWEDDVVHTDGSSCGFAAPERDFKPTPGSWKE</sequence>
<comment type="function">
    <text evidence="1">Is an aliphatic amidase with a restricted substrate specificity, as it only hydrolyzes formamide.</text>
</comment>
<comment type="catalytic activity">
    <reaction evidence="1">
        <text>formamide + H2O = formate + NH4(+)</text>
        <dbReference type="Rhea" id="RHEA:21948"/>
        <dbReference type="ChEBI" id="CHEBI:15377"/>
        <dbReference type="ChEBI" id="CHEBI:15740"/>
        <dbReference type="ChEBI" id="CHEBI:16397"/>
        <dbReference type="ChEBI" id="CHEBI:28938"/>
        <dbReference type="EC" id="3.5.1.49"/>
    </reaction>
</comment>
<comment type="similarity">
    <text evidence="1">Belongs to the carbon-nitrogen hydrolase superfamily. Aliphatic amidase family.</text>
</comment>